<sequence length="190" mass="21271">MAKANEIKRGMAVNLNGKLLLVKDIDVQSPSARGASTLYKMRFSDVRTGLKVEERFKGDENLDTITLTRRAVNFSYIDGDEYVFMDDEDYTPYNFKKEQIEDELLFIPEGGMPGMQVLTMEGQLLALELPQTVDMEIVDTAPSIKGASASARNKPAIMSTGLSIQVPEYISPGEKIRIHIAERRYMGRAD</sequence>
<comment type="similarity">
    <text evidence="1">Belongs to the elongation factor P family.</text>
</comment>
<comment type="sequence caution" evidence="2">
    <conflict type="erroneous initiation">
        <sequence resource="EMBL-CDS" id="AAM86452"/>
    </conflict>
</comment>
<comment type="sequence caution" evidence="2">
    <conflict type="erroneous initiation">
        <sequence resource="EMBL-CDS" id="AAS61550"/>
    </conflict>
</comment>
<keyword id="KW-1185">Reference proteome</keyword>
<organism>
    <name type="scientific">Yersinia pestis</name>
    <dbReference type="NCBI Taxonomy" id="632"/>
    <lineage>
        <taxon>Bacteria</taxon>
        <taxon>Pseudomonadati</taxon>
        <taxon>Pseudomonadota</taxon>
        <taxon>Gammaproteobacteria</taxon>
        <taxon>Enterobacterales</taxon>
        <taxon>Yersiniaceae</taxon>
        <taxon>Yersinia</taxon>
    </lineage>
</organism>
<protein>
    <recommendedName>
        <fullName evidence="1">Elongation factor P-like protein</fullName>
    </recommendedName>
</protein>
<feature type="chain" id="PRO_0000094398" description="Elongation factor P-like protein">
    <location>
        <begin position="1"/>
        <end position="190"/>
    </location>
</feature>
<proteinExistence type="inferred from homology"/>
<accession>Q8ZGK7</accession>
<accession>Q0WHC8</accession>
<accession>Q8D024</accession>
<evidence type="ECO:0000255" key="1">
    <source>
        <dbReference type="HAMAP-Rule" id="MF_00646"/>
    </source>
</evidence>
<evidence type="ECO:0000305" key="2"/>
<reference key="1">
    <citation type="journal article" date="2001" name="Nature">
        <title>Genome sequence of Yersinia pestis, the causative agent of plague.</title>
        <authorList>
            <person name="Parkhill J."/>
            <person name="Wren B.W."/>
            <person name="Thomson N.R."/>
            <person name="Titball R.W."/>
            <person name="Holden M.T.G."/>
            <person name="Prentice M.B."/>
            <person name="Sebaihia M."/>
            <person name="James K.D."/>
            <person name="Churcher C.M."/>
            <person name="Mungall K.L."/>
            <person name="Baker S."/>
            <person name="Basham D."/>
            <person name="Bentley S.D."/>
            <person name="Brooks K."/>
            <person name="Cerdeno-Tarraga A.-M."/>
            <person name="Chillingworth T."/>
            <person name="Cronin A."/>
            <person name="Davies R.M."/>
            <person name="Davis P."/>
            <person name="Dougan G."/>
            <person name="Feltwell T."/>
            <person name="Hamlin N."/>
            <person name="Holroyd S."/>
            <person name="Jagels K."/>
            <person name="Karlyshev A.V."/>
            <person name="Leather S."/>
            <person name="Moule S."/>
            <person name="Oyston P.C.F."/>
            <person name="Quail M.A."/>
            <person name="Rutherford K.M."/>
            <person name="Simmonds M."/>
            <person name="Skelton J."/>
            <person name="Stevens K."/>
            <person name="Whitehead S."/>
            <person name="Barrell B.G."/>
        </authorList>
    </citation>
    <scope>NUCLEOTIDE SEQUENCE [LARGE SCALE GENOMIC DNA]</scope>
    <source>
        <strain>CO-92 / Biovar Orientalis</strain>
    </source>
</reference>
<reference key="2">
    <citation type="journal article" date="2002" name="J. Bacteriol.">
        <title>Genome sequence of Yersinia pestis KIM.</title>
        <authorList>
            <person name="Deng W."/>
            <person name="Burland V."/>
            <person name="Plunkett G. III"/>
            <person name="Boutin A."/>
            <person name="Mayhew G.F."/>
            <person name="Liss P."/>
            <person name="Perna N.T."/>
            <person name="Rose D.J."/>
            <person name="Mau B."/>
            <person name="Zhou S."/>
            <person name="Schwartz D.C."/>
            <person name="Fetherston J.D."/>
            <person name="Lindler L.E."/>
            <person name="Brubaker R.R."/>
            <person name="Plano G.V."/>
            <person name="Straley S.C."/>
            <person name="McDonough K.A."/>
            <person name="Nilles M.L."/>
            <person name="Matson J.S."/>
            <person name="Blattner F.R."/>
            <person name="Perry R.D."/>
        </authorList>
    </citation>
    <scope>NUCLEOTIDE SEQUENCE [LARGE SCALE GENOMIC DNA]</scope>
    <source>
        <strain>KIM10+ / Biovar Mediaevalis</strain>
    </source>
</reference>
<reference key="3">
    <citation type="journal article" date="2004" name="DNA Res.">
        <title>Complete genome sequence of Yersinia pestis strain 91001, an isolate avirulent to humans.</title>
        <authorList>
            <person name="Song Y."/>
            <person name="Tong Z."/>
            <person name="Wang J."/>
            <person name="Wang L."/>
            <person name="Guo Z."/>
            <person name="Han Y."/>
            <person name="Zhang J."/>
            <person name="Pei D."/>
            <person name="Zhou D."/>
            <person name="Qin H."/>
            <person name="Pang X."/>
            <person name="Han Y."/>
            <person name="Zhai J."/>
            <person name="Li M."/>
            <person name="Cui B."/>
            <person name="Qi Z."/>
            <person name="Jin L."/>
            <person name="Dai R."/>
            <person name="Chen F."/>
            <person name="Li S."/>
            <person name="Ye C."/>
            <person name="Du Z."/>
            <person name="Lin W."/>
            <person name="Wang J."/>
            <person name="Yu J."/>
            <person name="Yang H."/>
            <person name="Wang J."/>
            <person name="Huang P."/>
            <person name="Yang R."/>
        </authorList>
    </citation>
    <scope>NUCLEOTIDE SEQUENCE [LARGE SCALE GENOMIC DNA]</scope>
    <source>
        <strain>91001 / Biovar Mediaevalis</strain>
    </source>
</reference>
<gene>
    <name type="ordered locus">YPO1284</name>
    <name type="ordered locus">y2901</name>
    <name type="ordered locus">YP_1307</name>
</gene>
<dbReference type="EMBL" id="AL590842">
    <property type="protein sequence ID" value="CAL19938.1"/>
    <property type="molecule type" value="Genomic_DNA"/>
</dbReference>
<dbReference type="EMBL" id="AE009952">
    <property type="protein sequence ID" value="AAM86452.1"/>
    <property type="status" value="ALT_INIT"/>
    <property type="molecule type" value="Genomic_DNA"/>
</dbReference>
<dbReference type="EMBL" id="AE017042">
    <property type="protein sequence ID" value="AAS61550.1"/>
    <property type="status" value="ALT_INIT"/>
    <property type="molecule type" value="Genomic_DNA"/>
</dbReference>
<dbReference type="PIR" id="AH0156">
    <property type="entry name" value="AH0156"/>
</dbReference>
<dbReference type="RefSeq" id="YP_002346310.1">
    <property type="nucleotide sequence ID" value="NC_003143.1"/>
</dbReference>
<dbReference type="SMR" id="Q8ZGK7"/>
<dbReference type="IntAct" id="Q8ZGK7">
    <property type="interactions" value="1"/>
</dbReference>
<dbReference type="STRING" id="214092.YPO1284"/>
<dbReference type="PaxDb" id="214092-YPO1284"/>
<dbReference type="EnsemblBacteria" id="AAS61550">
    <property type="protein sequence ID" value="AAS61550"/>
    <property type="gene ID" value="YP_1307"/>
</dbReference>
<dbReference type="KEGG" id="ype:YPO1284"/>
<dbReference type="KEGG" id="ypk:y2901"/>
<dbReference type="KEGG" id="ypm:YP_1307"/>
<dbReference type="PATRIC" id="fig|214092.21.peg.1593"/>
<dbReference type="eggNOG" id="COG0231">
    <property type="taxonomic scope" value="Bacteria"/>
</dbReference>
<dbReference type="HOGENOM" id="CLU_074944_2_0_6"/>
<dbReference type="OMA" id="SNHHKPG"/>
<dbReference type="OrthoDB" id="5599402at2"/>
<dbReference type="Proteomes" id="UP000000815">
    <property type="component" value="Chromosome"/>
</dbReference>
<dbReference type="Proteomes" id="UP000001019">
    <property type="component" value="Chromosome"/>
</dbReference>
<dbReference type="Proteomes" id="UP000002490">
    <property type="component" value="Chromosome"/>
</dbReference>
<dbReference type="GO" id="GO:0005737">
    <property type="term" value="C:cytoplasm"/>
    <property type="evidence" value="ECO:0000318"/>
    <property type="project" value="GO_Central"/>
</dbReference>
<dbReference type="GO" id="GO:0003746">
    <property type="term" value="F:translation elongation factor activity"/>
    <property type="evidence" value="ECO:0000318"/>
    <property type="project" value="GO_Central"/>
</dbReference>
<dbReference type="GO" id="GO:0043043">
    <property type="term" value="P:peptide biosynthetic process"/>
    <property type="evidence" value="ECO:0007669"/>
    <property type="project" value="InterPro"/>
</dbReference>
<dbReference type="CDD" id="cd04470">
    <property type="entry name" value="S1_EF-P_repeat_1"/>
    <property type="match status" value="1"/>
</dbReference>
<dbReference type="CDD" id="cd05794">
    <property type="entry name" value="S1_EF-P_repeat_2"/>
    <property type="match status" value="1"/>
</dbReference>
<dbReference type="FunFam" id="2.40.50.140:FF:000004">
    <property type="entry name" value="Elongation factor P"/>
    <property type="match status" value="1"/>
</dbReference>
<dbReference type="FunFam" id="2.30.30.30:FF:000011">
    <property type="entry name" value="Elongation factor P-like protein"/>
    <property type="match status" value="1"/>
</dbReference>
<dbReference type="FunFam" id="2.40.50.140:FF:000053">
    <property type="entry name" value="Elongation factor P-like protein"/>
    <property type="match status" value="1"/>
</dbReference>
<dbReference type="Gene3D" id="2.30.30.30">
    <property type="match status" value="1"/>
</dbReference>
<dbReference type="Gene3D" id="2.40.50.140">
    <property type="entry name" value="Nucleic acid-binding proteins"/>
    <property type="match status" value="2"/>
</dbReference>
<dbReference type="HAMAP" id="MF_00646">
    <property type="entry name" value="EFP"/>
    <property type="match status" value="1"/>
</dbReference>
<dbReference type="InterPro" id="IPR015365">
    <property type="entry name" value="Elong-fact-P_C"/>
</dbReference>
<dbReference type="InterPro" id="IPR012340">
    <property type="entry name" value="NA-bd_OB-fold"/>
</dbReference>
<dbReference type="InterPro" id="IPR014722">
    <property type="entry name" value="Rib_uL2_dom2"/>
</dbReference>
<dbReference type="InterPro" id="IPR020599">
    <property type="entry name" value="Transl_elong_fac_P/YeiP"/>
</dbReference>
<dbReference type="InterPro" id="IPR013185">
    <property type="entry name" value="Transl_elong_KOW-like"/>
</dbReference>
<dbReference type="InterPro" id="IPR011897">
    <property type="entry name" value="Transl_elong_p-like_YeiP"/>
</dbReference>
<dbReference type="InterPro" id="IPR001059">
    <property type="entry name" value="Transl_elong_P/YeiP_cen"/>
</dbReference>
<dbReference type="InterPro" id="IPR013852">
    <property type="entry name" value="Transl_elong_P/YeiP_CS"/>
</dbReference>
<dbReference type="InterPro" id="IPR008991">
    <property type="entry name" value="Translation_prot_SH3-like_sf"/>
</dbReference>
<dbReference type="NCBIfam" id="NF001810">
    <property type="entry name" value="PRK00529.1"/>
    <property type="match status" value="1"/>
</dbReference>
<dbReference type="NCBIfam" id="NF003392">
    <property type="entry name" value="PRK04542.1"/>
    <property type="match status" value="1"/>
</dbReference>
<dbReference type="NCBIfam" id="TIGR02178">
    <property type="entry name" value="yeiP"/>
    <property type="match status" value="1"/>
</dbReference>
<dbReference type="PANTHER" id="PTHR30053">
    <property type="entry name" value="ELONGATION FACTOR P"/>
    <property type="match status" value="1"/>
</dbReference>
<dbReference type="PANTHER" id="PTHR30053:SF14">
    <property type="entry name" value="TRANSLATION ELONGATION FACTOR KOW-LIKE DOMAIN-CONTAINING PROTEIN"/>
    <property type="match status" value="1"/>
</dbReference>
<dbReference type="Pfam" id="PF01132">
    <property type="entry name" value="EFP"/>
    <property type="match status" value="1"/>
</dbReference>
<dbReference type="Pfam" id="PF08207">
    <property type="entry name" value="EFP_N"/>
    <property type="match status" value="1"/>
</dbReference>
<dbReference type="Pfam" id="PF09285">
    <property type="entry name" value="Elong-fact-P_C"/>
    <property type="match status" value="1"/>
</dbReference>
<dbReference type="PIRSF" id="PIRSF005901">
    <property type="entry name" value="EF-P"/>
    <property type="match status" value="1"/>
</dbReference>
<dbReference type="SMART" id="SM01185">
    <property type="entry name" value="EFP"/>
    <property type="match status" value="1"/>
</dbReference>
<dbReference type="SMART" id="SM00841">
    <property type="entry name" value="Elong-fact-P_C"/>
    <property type="match status" value="1"/>
</dbReference>
<dbReference type="SUPFAM" id="SSF50249">
    <property type="entry name" value="Nucleic acid-binding proteins"/>
    <property type="match status" value="2"/>
</dbReference>
<dbReference type="SUPFAM" id="SSF50104">
    <property type="entry name" value="Translation proteins SH3-like domain"/>
    <property type="match status" value="1"/>
</dbReference>
<dbReference type="PROSITE" id="PS01275">
    <property type="entry name" value="EFP"/>
    <property type="match status" value="1"/>
</dbReference>
<name>EFPL_YERPE</name>